<proteinExistence type="evidence at protein level"/>
<feature type="chain" id="PRO_0000064279" description="Junction plakoglobin">
    <location>
        <begin position="1"/>
        <end position="745"/>
    </location>
</feature>
<feature type="repeat" description="ARM 1">
    <location>
        <begin position="132"/>
        <end position="171"/>
    </location>
</feature>
<feature type="repeat" description="ARM 2">
    <location>
        <begin position="172"/>
        <end position="215"/>
    </location>
</feature>
<feature type="repeat" description="ARM 3">
    <location>
        <begin position="216"/>
        <end position="255"/>
    </location>
</feature>
<feature type="repeat" description="ARM 4">
    <location>
        <begin position="258"/>
        <end position="297"/>
    </location>
</feature>
<feature type="repeat" description="ARM 5">
    <location>
        <begin position="298"/>
        <end position="341"/>
    </location>
</feature>
<feature type="repeat" description="ARM 6">
    <location>
        <begin position="342"/>
        <end position="381"/>
    </location>
</feature>
<feature type="repeat" description="ARM 7">
    <location>
        <begin position="383"/>
        <end position="420"/>
    </location>
</feature>
<feature type="repeat" description="ARM 8">
    <location>
        <begin position="423"/>
        <end position="464"/>
    </location>
</feature>
<feature type="repeat" description="ARM 9">
    <location>
        <begin position="470"/>
        <end position="510"/>
    </location>
</feature>
<feature type="repeat" description="ARM 10">
    <location>
        <begin position="512"/>
        <end position="551"/>
    </location>
</feature>
<feature type="repeat" description="ARM 11">
    <location>
        <begin position="574"/>
        <end position="613"/>
    </location>
</feature>
<feature type="repeat" description="ARM 12">
    <location>
        <begin position="615"/>
        <end position="661"/>
    </location>
</feature>
<feature type="region of interest" description="Interaction with DSC1 and DSG1" evidence="1">
    <location>
        <begin position="132"/>
        <end position="297"/>
    </location>
</feature>
<feature type="region of interest" description="Interaction with DSC1" evidence="1">
    <location>
        <begin position="574"/>
        <end position="661"/>
    </location>
</feature>
<feature type="modified residue" description="N-acetylmethionine" evidence="2">
    <location>
        <position position="1"/>
    </location>
</feature>
<feature type="modified residue" description="Phosphoserine" evidence="2">
    <location>
        <position position="99"/>
    </location>
</feature>
<feature type="modified residue" description="Phosphoserine" evidence="2">
    <location>
        <position position="125"/>
    </location>
</feature>
<feature type="modified residue" description="Phosphoserine" evidence="10">
    <location>
        <position position="182"/>
    </location>
</feature>
<feature type="modified residue" description="Phosphoserine" evidence="10">
    <location>
        <position position="665"/>
    </location>
</feature>
<feature type="modified residue" description="Phosphoserine" evidence="2">
    <location>
        <position position="730"/>
    </location>
</feature>
<feature type="glycosylation site" description="O-linked (GlcNAc) threonine" evidence="1">
    <location>
        <position position="14"/>
    </location>
</feature>
<dbReference type="EMBL" id="AK170934">
    <property type="protein sequence ID" value="BAE42126.1"/>
    <property type="molecule type" value="mRNA"/>
</dbReference>
<dbReference type="EMBL" id="BC040757">
    <property type="protein sequence ID" value="AAH40757.1"/>
    <property type="molecule type" value="mRNA"/>
</dbReference>
<dbReference type="EMBL" id="BC094461">
    <property type="protein sequence ID" value="AAH94461.1"/>
    <property type="molecule type" value="mRNA"/>
</dbReference>
<dbReference type="EMBL" id="M90365">
    <property type="protein sequence ID" value="AAB02885.1"/>
    <property type="molecule type" value="mRNA"/>
</dbReference>
<dbReference type="CCDS" id="CCDS25420.1"/>
<dbReference type="PIR" id="S35092">
    <property type="entry name" value="S35092"/>
</dbReference>
<dbReference type="RefSeq" id="NP_034723.1">
    <property type="nucleotide sequence ID" value="NM_010593.2"/>
</dbReference>
<dbReference type="RefSeq" id="XP_006532378.1">
    <property type="nucleotide sequence ID" value="XM_006532315.5"/>
</dbReference>
<dbReference type="RefSeq" id="XP_006532379.1">
    <property type="nucleotide sequence ID" value="XM_006532316.1"/>
</dbReference>
<dbReference type="RefSeq" id="XP_030101465.1">
    <property type="nucleotide sequence ID" value="XM_030245605.2"/>
</dbReference>
<dbReference type="SMR" id="Q02257"/>
<dbReference type="BioGRID" id="200874">
    <property type="interactions" value="73"/>
</dbReference>
<dbReference type="CORUM" id="Q02257"/>
<dbReference type="FunCoup" id="Q02257">
    <property type="interactions" value="562"/>
</dbReference>
<dbReference type="IntAct" id="Q02257">
    <property type="interactions" value="54"/>
</dbReference>
<dbReference type="MINT" id="Q02257"/>
<dbReference type="STRING" id="10090.ENSMUSP00000001592"/>
<dbReference type="GlyCosmos" id="Q02257">
    <property type="glycosylation" value="1 site, No reported glycans"/>
</dbReference>
<dbReference type="GlyGen" id="Q02257">
    <property type="glycosylation" value="3 sites, 1 O-linked glycan (2 sites)"/>
</dbReference>
<dbReference type="iPTMnet" id="Q02257"/>
<dbReference type="MetOSite" id="Q02257"/>
<dbReference type="PhosphoSitePlus" id="Q02257"/>
<dbReference type="SwissPalm" id="Q02257"/>
<dbReference type="CPTAC" id="non-CPTAC-3490"/>
<dbReference type="jPOST" id="Q02257"/>
<dbReference type="PaxDb" id="10090-ENSMUSP00000001592"/>
<dbReference type="PeptideAtlas" id="Q02257"/>
<dbReference type="ProteomicsDB" id="289671"/>
<dbReference type="Antibodypedia" id="80391">
    <property type="antibodies" value="1299 antibodies from 45 providers"/>
</dbReference>
<dbReference type="DNASU" id="16480"/>
<dbReference type="Ensembl" id="ENSMUST00000001592.15">
    <property type="protein sequence ID" value="ENSMUSP00000001592.9"/>
    <property type="gene ID" value="ENSMUSG00000001552.15"/>
</dbReference>
<dbReference type="Ensembl" id="ENSMUST00000107403.2">
    <property type="protein sequence ID" value="ENSMUSP00000103026.2"/>
    <property type="gene ID" value="ENSMUSG00000001552.15"/>
</dbReference>
<dbReference type="GeneID" id="16480"/>
<dbReference type="KEGG" id="mmu:16480"/>
<dbReference type="UCSC" id="uc007lkz.2">
    <property type="organism name" value="mouse"/>
</dbReference>
<dbReference type="AGR" id="MGI:96650"/>
<dbReference type="CTD" id="3728"/>
<dbReference type="MGI" id="MGI:96650">
    <property type="gene designation" value="Jup"/>
</dbReference>
<dbReference type="VEuPathDB" id="HostDB:ENSMUSG00000001552"/>
<dbReference type="eggNOG" id="KOG4203">
    <property type="taxonomic scope" value="Eukaryota"/>
</dbReference>
<dbReference type="GeneTree" id="ENSGT00940000156395"/>
<dbReference type="HOGENOM" id="CLU_008757_1_1_1"/>
<dbReference type="InParanoid" id="Q02257"/>
<dbReference type="OMA" id="DETCGRQ"/>
<dbReference type="OrthoDB" id="195736at2759"/>
<dbReference type="PhylomeDB" id="Q02257"/>
<dbReference type="TreeFam" id="TF317997"/>
<dbReference type="Reactome" id="R-MMU-418990">
    <property type="pathway name" value="Adherens junctions interactions"/>
</dbReference>
<dbReference type="Reactome" id="R-MMU-5218920">
    <property type="pathway name" value="VEGFR2 mediated vascular permeability"/>
</dbReference>
<dbReference type="Reactome" id="R-MMU-6798695">
    <property type="pathway name" value="Neutrophil degranulation"/>
</dbReference>
<dbReference type="Reactome" id="R-MMU-6805567">
    <property type="pathway name" value="Keratinization"/>
</dbReference>
<dbReference type="Reactome" id="R-MMU-6809371">
    <property type="pathway name" value="Formation of the cornified envelope"/>
</dbReference>
<dbReference type="Reactome" id="R-MMU-8980692">
    <property type="pathway name" value="RHOA GTPase cycle"/>
</dbReference>
<dbReference type="Reactome" id="R-MMU-9013026">
    <property type="pathway name" value="RHOB GTPase cycle"/>
</dbReference>
<dbReference type="Reactome" id="R-MMU-9013106">
    <property type="pathway name" value="RHOC GTPase cycle"/>
</dbReference>
<dbReference type="Reactome" id="R-MMU-9013406">
    <property type="pathway name" value="RHOQ GTPase cycle"/>
</dbReference>
<dbReference type="Reactome" id="R-MMU-9013407">
    <property type="pathway name" value="RHOH GTPase cycle"/>
</dbReference>
<dbReference type="Reactome" id="R-MMU-9762292">
    <property type="pathway name" value="Regulation of CDH11 function"/>
</dbReference>
<dbReference type="BioGRID-ORCS" id="16480">
    <property type="hits" value="3 hits in 81 CRISPR screens"/>
</dbReference>
<dbReference type="CD-CODE" id="CE726F99">
    <property type="entry name" value="Postsynaptic density"/>
</dbReference>
<dbReference type="ChiTaRS" id="Jup">
    <property type="organism name" value="mouse"/>
</dbReference>
<dbReference type="PRO" id="PR:Q02257"/>
<dbReference type="Proteomes" id="UP000000589">
    <property type="component" value="Chromosome 11"/>
</dbReference>
<dbReference type="RNAct" id="Q02257">
    <property type="molecule type" value="protein"/>
</dbReference>
<dbReference type="Bgee" id="ENSMUSG00000001552">
    <property type="expression patterns" value="Expressed in lip and 280 other cell types or tissues"/>
</dbReference>
<dbReference type="GO" id="GO:0005912">
    <property type="term" value="C:adherens junction"/>
    <property type="evidence" value="ECO:0000314"/>
    <property type="project" value="MGI"/>
</dbReference>
<dbReference type="GO" id="GO:0016342">
    <property type="term" value="C:catenin complex"/>
    <property type="evidence" value="ECO:0000314"/>
    <property type="project" value="MGI"/>
</dbReference>
<dbReference type="GO" id="GO:0005911">
    <property type="term" value="C:cell-cell junction"/>
    <property type="evidence" value="ECO:0000314"/>
    <property type="project" value="MGI"/>
</dbReference>
<dbReference type="GO" id="GO:0001533">
    <property type="term" value="C:cornified envelope"/>
    <property type="evidence" value="ECO:0000314"/>
    <property type="project" value="MGI"/>
</dbReference>
<dbReference type="GO" id="GO:0005829">
    <property type="term" value="C:cytosol"/>
    <property type="evidence" value="ECO:0000314"/>
    <property type="project" value="MGI"/>
</dbReference>
<dbReference type="GO" id="GO:0030057">
    <property type="term" value="C:desmosome"/>
    <property type="evidence" value="ECO:0000314"/>
    <property type="project" value="UniProtKB"/>
</dbReference>
<dbReference type="GO" id="GO:0071665">
    <property type="term" value="C:gamma-catenin-TCF7L2 complex"/>
    <property type="evidence" value="ECO:0007669"/>
    <property type="project" value="Ensembl"/>
</dbReference>
<dbReference type="GO" id="GO:0014704">
    <property type="term" value="C:intercalated disc"/>
    <property type="evidence" value="ECO:0007669"/>
    <property type="project" value="Ensembl"/>
</dbReference>
<dbReference type="GO" id="GO:0005882">
    <property type="term" value="C:intermediate filament"/>
    <property type="evidence" value="ECO:0000314"/>
    <property type="project" value="BHF-UCL"/>
</dbReference>
<dbReference type="GO" id="GO:0005886">
    <property type="term" value="C:plasma membrane"/>
    <property type="evidence" value="ECO:0000304"/>
    <property type="project" value="Reactome"/>
</dbReference>
<dbReference type="GO" id="GO:0032993">
    <property type="term" value="C:protein-DNA complex"/>
    <property type="evidence" value="ECO:0007669"/>
    <property type="project" value="Ensembl"/>
</dbReference>
<dbReference type="GO" id="GO:0030018">
    <property type="term" value="C:Z disc"/>
    <property type="evidence" value="ECO:0000314"/>
    <property type="project" value="MGI"/>
</dbReference>
<dbReference type="GO" id="GO:0045294">
    <property type="term" value="F:alpha-catenin binding"/>
    <property type="evidence" value="ECO:0000353"/>
    <property type="project" value="MGI"/>
</dbReference>
<dbReference type="GO" id="GO:0045296">
    <property type="term" value="F:cadherin binding"/>
    <property type="evidence" value="ECO:0007669"/>
    <property type="project" value="Ensembl"/>
</dbReference>
<dbReference type="GO" id="GO:0106006">
    <property type="term" value="F:cytoskeletal protein-membrane anchor activity"/>
    <property type="evidence" value="ECO:0007669"/>
    <property type="project" value="Ensembl"/>
</dbReference>
<dbReference type="GO" id="GO:0019903">
    <property type="term" value="F:protein phosphatase binding"/>
    <property type="evidence" value="ECO:0007669"/>
    <property type="project" value="Ensembl"/>
</dbReference>
<dbReference type="GO" id="GO:0003713">
    <property type="term" value="F:transcription coactivator activity"/>
    <property type="evidence" value="ECO:0007669"/>
    <property type="project" value="Ensembl"/>
</dbReference>
<dbReference type="GO" id="GO:0086073">
    <property type="term" value="P:bundle of His cell-Purkinje myocyte adhesion involved in cell communication"/>
    <property type="evidence" value="ECO:0007669"/>
    <property type="project" value="Ensembl"/>
</dbReference>
<dbReference type="GO" id="GO:0007155">
    <property type="term" value="P:cell adhesion"/>
    <property type="evidence" value="ECO:0000314"/>
    <property type="project" value="MGI"/>
</dbReference>
<dbReference type="GO" id="GO:0016477">
    <property type="term" value="P:cell migration"/>
    <property type="evidence" value="ECO:0007669"/>
    <property type="project" value="Ensembl"/>
</dbReference>
<dbReference type="GO" id="GO:0098609">
    <property type="term" value="P:cell-cell adhesion"/>
    <property type="evidence" value="ECO:0000315"/>
    <property type="project" value="MGI"/>
</dbReference>
<dbReference type="GO" id="GO:0071681">
    <property type="term" value="P:cellular response to indole-3-methanol"/>
    <property type="evidence" value="ECO:0007669"/>
    <property type="project" value="Ensembl"/>
</dbReference>
<dbReference type="GO" id="GO:0002159">
    <property type="term" value="P:desmosome assembly"/>
    <property type="evidence" value="ECO:0000315"/>
    <property type="project" value="MGI"/>
</dbReference>
<dbReference type="GO" id="GO:0050982">
    <property type="term" value="P:detection of mechanical stimulus"/>
    <property type="evidence" value="ECO:0007669"/>
    <property type="project" value="Ensembl"/>
</dbReference>
<dbReference type="GO" id="GO:0043537">
    <property type="term" value="P:negative regulation of blood vessel endothelial cell migration"/>
    <property type="evidence" value="ECO:0007669"/>
    <property type="project" value="Ensembl"/>
</dbReference>
<dbReference type="GO" id="GO:0045766">
    <property type="term" value="P:positive regulation of angiogenesis"/>
    <property type="evidence" value="ECO:0007669"/>
    <property type="project" value="Ensembl"/>
</dbReference>
<dbReference type="GO" id="GO:0001954">
    <property type="term" value="P:positive regulation of cell-matrix adhesion"/>
    <property type="evidence" value="ECO:0007669"/>
    <property type="project" value="Ensembl"/>
</dbReference>
<dbReference type="GO" id="GO:0042307">
    <property type="term" value="P:positive regulation of protein import into nucleus"/>
    <property type="evidence" value="ECO:0007669"/>
    <property type="project" value="Ensembl"/>
</dbReference>
<dbReference type="GO" id="GO:0045944">
    <property type="term" value="P:positive regulation of transcription by RNA polymerase II"/>
    <property type="evidence" value="ECO:0007669"/>
    <property type="project" value="Ensembl"/>
</dbReference>
<dbReference type="GO" id="GO:0072659">
    <property type="term" value="P:protein localization to plasma membrane"/>
    <property type="evidence" value="ECO:0007669"/>
    <property type="project" value="Ensembl"/>
</dbReference>
<dbReference type="GO" id="GO:0042127">
    <property type="term" value="P:regulation of cell population proliferation"/>
    <property type="evidence" value="ECO:0007669"/>
    <property type="project" value="Ensembl"/>
</dbReference>
<dbReference type="GO" id="GO:0086091">
    <property type="term" value="P:regulation of heart rate by cardiac conduction"/>
    <property type="evidence" value="ECO:0007669"/>
    <property type="project" value="Ensembl"/>
</dbReference>
<dbReference type="GO" id="GO:0098911">
    <property type="term" value="P:regulation of ventricular cardiac muscle cell action potential"/>
    <property type="evidence" value="ECO:0007669"/>
    <property type="project" value="Ensembl"/>
</dbReference>
<dbReference type="GO" id="GO:0043588">
    <property type="term" value="P:skin development"/>
    <property type="evidence" value="ECO:0000315"/>
    <property type="project" value="MGI"/>
</dbReference>
<dbReference type="FunFam" id="1.25.10.10:FF:000015">
    <property type="entry name" value="Catenin beta-1"/>
    <property type="match status" value="1"/>
</dbReference>
<dbReference type="Gene3D" id="1.25.10.10">
    <property type="entry name" value="Leucine-rich Repeat Variant"/>
    <property type="match status" value="1"/>
</dbReference>
<dbReference type="InterPro" id="IPR011989">
    <property type="entry name" value="ARM-like"/>
</dbReference>
<dbReference type="InterPro" id="IPR016024">
    <property type="entry name" value="ARM-type_fold"/>
</dbReference>
<dbReference type="InterPro" id="IPR000225">
    <property type="entry name" value="Armadillo"/>
</dbReference>
<dbReference type="InterPro" id="IPR013284">
    <property type="entry name" value="Beta-catenin"/>
</dbReference>
<dbReference type="PANTHER" id="PTHR45976">
    <property type="entry name" value="ARMADILLO SEGMENT POLARITY PROTEIN"/>
    <property type="match status" value="1"/>
</dbReference>
<dbReference type="Pfam" id="PF00514">
    <property type="entry name" value="Arm"/>
    <property type="match status" value="3"/>
</dbReference>
<dbReference type="PRINTS" id="PR01869">
    <property type="entry name" value="BCATNINFAMLY"/>
</dbReference>
<dbReference type="SMART" id="SM00185">
    <property type="entry name" value="ARM"/>
    <property type="match status" value="12"/>
</dbReference>
<dbReference type="SUPFAM" id="SSF48371">
    <property type="entry name" value="ARM repeat"/>
    <property type="match status" value="1"/>
</dbReference>
<dbReference type="PROSITE" id="PS50176">
    <property type="entry name" value="ARM_REPEAT"/>
    <property type="match status" value="9"/>
</dbReference>
<reference key="1">
    <citation type="journal article" date="2005" name="Science">
        <title>The transcriptional landscape of the mammalian genome.</title>
        <authorList>
            <person name="Carninci P."/>
            <person name="Kasukawa T."/>
            <person name="Katayama S."/>
            <person name="Gough J."/>
            <person name="Frith M.C."/>
            <person name="Maeda N."/>
            <person name="Oyama R."/>
            <person name="Ravasi T."/>
            <person name="Lenhard B."/>
            <person name="Wells C."/>
            <person name="Kodzius R."/>
            <person name="Shimokawa K."/>
            <person name="Bajic V.B."/>
            <person name="Brenner S.E."/>
            <person name="Batalov S."/>
            <person name="Forrest A.R."/>
            <person name="Zavolan M."/>
            <person name="Davis M.J."/>
            <person name="Wilming L.G."/>
            <person name="Aidinis V."/>
            <person name="Allen J.E."/>
            <person name="Ambesi-Impiombato A."/>
            <person name="Apweiler R."/>
            <person name="Aturaliya R.N."/>
            <person name="Bailey T.L."/>
            <person name="Bansal M."/>
            <person name="Baxter L."/>
            <person name="Beisel K.W."/>
            <person name="Bersano T."/>
            <person name="Bono H."/>
            <person name="Chalk A.M."/>
            <person name="Chiu K.P."/>
            <person name="Choudhary V."/>
            <person name="Christoffels A."/>
            <person name="Clutterbuck D.R."/>
            <person name="Crowe M.L."/>
            <person name="Dalla E."/>
            <person name="Dalrymple B.P."/>
            <person name="de Bono B."/>
            <person name="Della Gatta G."/>
            <person name="di Bernardo D."/>
            <person name="Down T."/>
            <person name="Engstrom P."/>
            <person name="Fagiolini M."/>
            <person name="Faulkner G."/>
            <person name="Fletcher C.F."/>
            <person name="Fukushima T."/>
            <person name="Furuno M."/>
            <person name="Futaki S."/>
            <person name="Gariboldi M."/>
            <person name="Georgii-Hemming P."/>
            <person name="Gingeras T.R."/>
            <person name="Gojobori T."/>
            <person name="Green R.E."/>
            <person name="Gustincich S."/>
            <person name="Harbers M."/>
            <person name="Hayashi Y."/>
            <person name="Hensch T.K."/>
            <person name="Hirokawa N."/>
            <person name="Hill D."/>
            <person name="Huminiecki L."/>
            <person name="Iacono M."/>
            <person name="Ikeo K."/>
            <person name="Iwama A."/>
            <person name="Ishikawa T."/>
            <person name="Jakt M."/>
            <person name="Kanapin A."/>
            <person name="Katoh M."/>
            <person name="Kawasawa Y."/>
            <person name="Kelso J."/>
            <person name="Kitamura H."/>
            <person name="Kitano H."/>
            <person name="Kollias G."/>
            <person name="Krishnan S.P."/>
            <person name="Kruger A."/>
            <person name="Kummerfeld S.K."/>
            <person name="Kurochkin I.V."/>
            <person name="Lareau L.F."/>
            <person name="Lazarevic D."/>
            <person name="Lipovich L."/>
            <person name="Liu J."/>
            <person name="Liuni S."/>
            <person name="McWilliam S."/>
            <person name="Madan Babu M."/>
            <person name="Madera M."/>
            <person name="Marchionni L."/>
            <person name="Matsuda H."/>
            <person name="Matsuzawa S."/>
            <person name="Miki H."/>
            <person name="Mignone F."/>
            <person name="Miyake S."/>
            <person name="Morris K."/>
            <person name="Mottagui-Tabar S."/>
            <person name="Mulder N."/>
            <person name="Nakano N."/>
            <person name="Nakauchi H."/>
            <person name="Ng P."/>
            <person name="Nilsson R."/>
            <person name="Nishiguchi S."/>
            <person name="Nishikawa S."/>
            <person name="Nori F."/>
            <person name="Ohara O."/>
            <person name="Okazaki Y."/>
            <person name="Orlando V."/>
            <person name="Pang K.C."/>
            <person name="Pavan W.J."/>
            <person name="Pavesi G."/>
            <person name="Pesole G."/>
            <person name="Petrovsky N."/>
            <person name="Piazza S."/>
            <person name="Reed J."/>
            <person name="Reid J.F."/>
            <person name="Ring B.Z."/>
            <person name="Ringwald M."/>
            <person name="Rost B."/>
            <person name="Ruan Y."/>
            <person name="Salzberg S.L."/>
            <person name="Sandelin A."/>
            <person name="Schneider C."/>
            <person name="Schoenbach C."/>
            <person name="Sekiguchi K."/>
            <person name="Semple C.A."/>
            <person name="Seno S."/>
            <person name="Sessa L."/>
            <person name="Sheng Y."/>
            <person name="Shibata Y."/>
            <person name="Shimada H."/>
            <person name="Shimada K."/>
            <person name="Silva D."/>
            <person name="Sinclair B."/>
            <person name="Sperling S."/>
            <person name="Stupka E."/>
            <person name="Sugiura K."/>
            <person name="Sultana R."/>
            <person name="Takenaka Y."/>
            <person name="Taki K."/>
            <person name="Tammoja K."/>
            <person name="Tan S.L."/>
            <person name="Tang S."/>
            <person name="Taylor M.S."/>
            <person name="Tegner J."/>
            <person name="Teichmann S.A."/>
            <person name="Ueda H.R."/>
            <person name="van Nimwegen E."/>
            <person name="Verardo R."/>
            <person name="Wei C.L."/>
            <person name="Yagi K."/>
            <person name="Yamanishi H."/>
            <person name="Zabarovsky E."/>
            <person name="Zhu S."/>
            <person name="Zimmer A."/>
            <person name="Hide W."/>
            <person name="Bult C."/>
            <person name="Grimmond S.M."/>
            <person name="Teasdale R.D."/>
            <person name="Liu E.T."/>
            <person name="Brusic V."/>
            <person name="Quackenbush J."/>
            <person name="Wahlestedt C."/>
            <person name="Mattick J.S."/>
            <person name="Hume D.A."/>
            <person name="Kai C."/>
            <person name="Sasaki D."/>
            <person name="Tomaru Y."/>
            <person name="Fukuda S."/>
            <person name="Kanamori-Katayama M."/>
            <person name="Suzuki M."/>
            <person name="Aoki J."/>
            <person name="Arakawa T."/>
            <person name="Iida J."/>
            <person name="Imamura K."/>
            <person name="Itoh M."/>
            <person name="Kato T."/>
            <person name="Kawaji H."/>
            <person name="Kawagashira N."/>
            <person name="Kawashima T."/>
            <person name="Kojima M."/>
            <person name="Kondo S."/>
            <person name="Konno H."/>
            <person name="Nakano K."/>
            <person name="Ninomiya N."/>
            <person name="Nishio T."/>
            <person name="Okada M."/>
            <person name="Plessy C."/>
            <person name="Shibata K."/>
            <person name="Shiraki T."/>
            <person name="Suzuki S."/>
            <person name="Tagami M."/>
            <person name="Waki K."/>
            <person name="Watahiki A."/>
            <person name="Okamura-Oho Y."/>
            <person name="Suzuki H."/>
            <person name="Kawai J."/>
            <person name="Hayashizaki Y."/>
        </authorList>
    </citation>
    <scope>NUCLEOTIDE SEQUENCE [LARGE SCALE MRNA]</scope>
    <source>
        <strain>NOD</strain>
    </source>
</reference>
<reference key="2">
    <citation type="journal article" date="2004" name="Genome Res.">
        <title>The status, quality, and expansion of the NIH full-length cDNA project: the Mammalian Gene Collection (MGC).</title>
        <authorList>
            <consortium name="The MGC Project Team"/>
        </authorList>
    </citation>
    <scope>NUCLEOTIDE SEQUENCE [LARGE SCALE MRNA]</scope>
    <source>
        <strain>FVB/N</strain>
        <tissue>Colon</tissue>
        <tissue>Mammary tumor</tissue>
    </source>
</reference>
<reference key="3">
    <citation type="journal article" date="1992" name="Science">
        <title>Plakoglobin and beta-catenin: distinct but closely related.</title>
        <authorList>
            <person name="Butz S."/>
            <person name="Stappert J."/>
            <person name="Weissig H."/>
            <person name="Kemler R."/>
        </authorList>
    </citation>
    <scope>NUCLEOTIDE SEQUENCE [MRNA] OF 125-745</scope>
</reference>
<reference key="4">
    <citation type="submission" date="1996-06" db="EMBL/GenBank/DDBJ databases">
        <authorList>
            <person name="Butz S."/>
        </authorList>
    </citation>
    <scope>SEQUENCE REVISION TO 418 AND 420</scope>
</reference>
<reference key="5">
    <citation type="journal article" date="1994" name="FEBS Lett.">
        <title>Distinct cadherin-catenin complexes in Ca(2+)-dependent cell-cell adhesion.</title>
        <authorList>
            <person name="Butz S."/>
            <person name="Kemler R."/>
        </authorList>
    </citation>
    <scope>IDENTIFICATION IN AN E-CADHERIN/CATENIN ADHESION COMPLEX</scope>
</reference>
<reference key="6">
    <citation type="journal article" date="2005" name="Cell">
        <title>Deconstructing the cadherin-catenin-actin complex.</title>
        <authorList>
            <person name="Yamada S."/>
            <person name="Pokutta S."/>
            <person name="Drees F."/>
            <person name="Weis W.I."/>
            <person name="Nelson W.J."/>
        </authorList>
    </citation>
    <scope>RECONSTITUTION OF THE E-CADHERIN/CATENIN ADHESION COMPLEX</scope>
    <scope>LACK OF ACTIN-BINDING BY THE E-CADHERIN/CATENIN ADHESION COMPLEX</scope>
</reference>
<reference key="7">
    <citation type="journal article" date="2008" name="J. Exp. Med.">
        <title>VE-PTP maintains the endothelial barrier via plakoglobin and becomes dissociated from VE-cadherin by leukocytes and by VEGF.</title>
        <authorList>
            <person name="Nottebaum A.F."/>
            <person name="Cagna G."/>
            <person name="Winderlich M."/>
            <person name="Gamp A.C."/>
            <person name="Linnepe R."/>
            <person name="Polaschegg C."/>
            <person name="Filippova K."/>
            <person name="Lyck R."/>
            <person name="Engelhardt B."/>
            <person name="Kamenyeva O."/>
            <person name="Bixel M.G."/>
            <person name="Butz S."/>
            <person name="Vestweber D."/>
        </authorList>
    </citation>
    <scope>FUNCTION</scope>
</reference>
<reference key="8">
    <citation type="journal article" date="2010" name="Cell">
        <title>A tissue-specific atlas of mouse protein phosphorylation and expression.</title>
        <authorList>
            <person name="Huttlin E.L."/>
            <person name="Jedrychowski M.P."/>
            <person name="Elias J.E."/>
            <person name="Goswami T."/>
            <person name="Rad R."/>
            <person name="Beausoleil S.A."/>
            <person name="Villen J."/>
            <person name="Haas W."/>
            <person name="Sowa M.E."/>
            <person name="Gygi S.P."/>
        </authorList>
    </citation>
    <scope>PHOSPHORYLATION [LARGE SCALE ANALYSIS] AT SER-182 AND SER-665</scope>
    <scope>IDENTIFICATION BY MASS SPECTROMETRY [LARGE SCALE ANALYSIS]</scope>
    <source>
        <tissue>Brain</tissue>
        <tissue>Brown adipose tissue</tissue>
        <tissue>Heart</tissue>
        <tissue>Kidney</tissue>
        <tissue>Liver</tissue>
        <tissue>Lung</tissue>
        <tissue>Pancreas</tissue>
        <tissue>Spleen</tissue>
        <tissue>Testis</tissue>
    </source>
</reference>
<reference key="9">
    <citation type="journal article" date="2012" name="Breast Cancer Res.">
        <title>Deficiency of the p53/p63 target Perp alters mammary gland homeostasis and promotes cancer.</title>
        <authorList>
            <person name="Dusek R.L."/>
            <person name="Bascom J.L."/>
            <person name="Vogel H."/>
            <person name="Baron S."/>
            <person name="Borowsky A.D."/>
            <person name="Bissell M.J."/>
            <person name="Attardi L.D."/>
        </authorList>
    </citation>
    <scope>SUBCELLULAR LOCATION</scope>
    <scope>TISSUE SPECIFICITY</scope>
</reference>
<reference key="10">
    <citation type="journal article" date="2016" name="J. Invest. Dermatol.">
        <title>Growth Retardation, Loss of Desmosomal Adhesion, and Impaired Tight Junction Function Identify a Unique Role of Plakophilin 1 In Vivo.</title>
        <authorList>
            <person name="Rietscher K."/>
            <person name="Wolf A."/>
            <person name="Hause G."/>
            <person name="Rother A."/>
            <person name="Keil R."/>
            <person name="Magin T.M."/>
            <person name="Glass M."/>
            <person name="Niessen C.M."/>
            <person name="Hatzfeld M."/>
        </authorList>
    </citation>
    <scope>DEVELOPMENTAL STAGE</scope>
</reference>
<reference key="11">
    <citation type="journal article" date="2024" name="Kidney Int.">
        <title>The role of desmoglein-2 in kidney disease.</title>
        <authorList>
            <person name="Xu T."/>
            <person name="Herkens L."/>
            <person name="Jia T."/>
            <person name="Klinkhammer B.M."/>
            <person name="Kant S."/>
            <person name="Krusche C.A."/>
            <person name="Buhl E.M."/>
            <person name="Hayat S."/>
            <person name="Floege J."/>
            <person name="Strnad P."/>
            <person name="Kramann R."/>
            <person name="Djudjaj S."/>
            <person name="Boor P."/>
        </authorList>
    </citation>
    <scope>SUBCELLULAR LOCATION</scope>
</reference>
<sequence length="745" mass="81801">MEVMNLIEQPIKVTEWQQTYTYDSGIHSGVNTCVPSVSSKGIMDEDDACGRQYTLKKTTTYTQGVPQNQGDLEYQMSTTARAKRVREAMCPGVSGEDSSLLLATQVEGQTTNLQRLAEPSQLLKSAIVHLINYQDDAELATRALPELTKLLNDEDPVVVTKAAMIVNQLSKKEASRRALMGSPQLVAAVVRTMQNTSDLDTARCTTSILHNLSHHREGLLAIFKSGGIPALVRMLSSPVESVLFYAITTLHNLLLYQEGAKMAVRLADGLQKMVPLLNKNNPKFLAITTDCLQLLAYGNQESKLIILANGGPQGLVQIMRNYSYEKLLWTTSRVLKVLSVCPSNKPAIVEAGGMQALGKHLTSNSPRLVQNCLWTLRNLSDVATKQEGLESVLKILVNQLSVDDVNVLTCATGTLSNLTCNNSKNKTLVTQNSGVEALIHAILRAGDKDDITEPAVCALRHLTSRHPEAEMAQNSVRLNYGIPAIVKLLNQPNQWPLVKATIGLIRNLALCPANHAPLQEAAVIPRLVQLLVKAHQDAQRHVAAGTQQPYTDGVRMEEIVEGCTGALHILARDPMNRMEIFRLNTIPLFVQLLYSSVENIQRVAAGVLCELAQDKEAADAIDAEGASAPLMELLHSRNEGTATYAAAVLFRISEDKNPDYRKRVSVELTNSLFKHDPAAWEAAQSMIPINEPYADDMDATYRPMYSSDVPLDPLDMHMDLDGDYPMDTYSDGLRPPYPTADHMLA</sequence>
<evidence type="ECO:0000250" key="1"/>
<evidence type="ECO:0000250" key="2">
    <source>
        <dbReference type="UniProtKB" id="P14923"/>
    </source>
</evidence>
<evidence type="ECO:0000250" key="3">
    <source>
        <dbReference type="UniProtKB" id="Q9PVF7"/>
    </source>
</evidence>
<evidence type="ECO:0000269" key="4">
    <source>
    </source>
</evidence>
<evidence type="ECO:0000269" key="5">
    <source>
    </source>
</evidence>
<evidence type="ECO:0000269" key="6">
    <source>
    </source>
</evidence>
<evidence type="ECO:0000269" key="7">
    <source>
    </source>
</evidence>
<evidence type="ECO:0000305" key="8"/>
<evidence type="ECO:0000312" key="9">
    <source>
        <dbReference type="MGI" id="MGI:96650"/>
    </source>
</evidence>
<evidence type="ECO:0007744" key="10">
    <source>
    </source>
</evidence>
<protein>
    <recommendedName>
        <fullName evidence="9">Junction plakoglobin</fullName>
    </recommendedName>
    <alternativeName>
        <fullName>Desmoplakin III</fullName>
    </alternativeName>
    <alternativeName>
        <fullName>Desmoplakin-3</fullName>
    </alternativeName>
</protein>
<accession>Q02257</accession>
<accession>Q8CGD3</accession>
<keyword id="KW-0007">Acetylation</keyword>
<keyword id="KW-0130">Cell adhesion</keyword>
<keyword id="KW-0965">Cell junction</keyword>
<keyword id="KW-1003">Cell membrane</keyword>
<keyword id="KW-0963">Cytoplasm</keyword>
<keyword id="KW-0206">Cytoskeleton</keyword>
<keyword id="KW-0325">Glycoprotein</keyword>
<keyword id="KW-0472">Membrane</keyword>
<keyword id="KW-0539">Nucleus</keyword>
<keyword id="KW-0597">Phosphoprotein</keyword>
<keyword id="KW-1185">Reference proteome</keyword>
<keyword id="KW-0677">Repeat</keyword>
<comment type="function">
    <text evidence="4">Common junctional plaque protein. The membrane-associated plaques are architectural elements in an important strategic position to influence the arrangement and function of both the cytoskeleton and the cells within the tissue. The presence of plakoglobin in both the desmosomes and in the intermediate junctions suggests that it plays a central role in the structure and function of submembranous plaques. Acts as a substrate for VE-PTP and is required by it to stimulate VE-cadherin function in endothelial cells. Can replace beta-catenin in E-cadherin/catenin adhesion complexes which are proposed to couple cadherins to the actin cytoskeleton.</text>
</comment>
<comment type="subunit">
    <text evidence="1 2">Homodimer. Component of an E-cadherin/catenin adhesion complex composed of at least E-cadherin/CDH1 and gamma-catenin/JUP, and possibly alpha-catenin/CTNNA1; the complex is located to adherens junctions. The stable association of CTNNA1 is controversial as CTNNA1 was shown not to bind to F-actin when assembled in the complex. Interacts with MUC1. Interacts with CAV1. Interacts with PTPRJ. Interacts with DSG1. Interacts with DSC1 and DSC2. Interacts with PKP2 (By similarity). Interacts with PKP3 (via N-terminus); the interaction is required for PKP3 localization to desmosome cell-cell junctions (By similarity). Interacts with DSG4 (By similarity).</text>
</comment>
<comment type="subcellular location">
    <subcellularLocation>
        <location evidence="2">Cell junction</location>
        <location evidence="2">Adherens junction</location>
    </subcellularLocation>
    <subcellularLocation>
        <location evidence="5 7">Cell junction</location>
        <location evidence="5 7">Desmosome</location>
    </subcellularLocation>
    <subcellularLocation>
        <location evidence="2">Cytoplasm</location>
        <location evidence="2">Cytoskeleton</location>
    </subcellularLocation>
    <subcellularLocation>
        <location>Cell membrane</location>
        <topology evidence="2">Peripheral membrane protein</topology>
    </subcellularLocation>
    <subcellularLocation>
        <location evidence="3">Cytoplasm</location>
    </subcellularLocation>
    <subcellularLocation>
        <location evidence="3">Cell junction</location>
    </subcellularLocation>
    <subcellularLocation>
        <location evidence="3">Nucleus</location>
    </subcellularLocation>
    <text evidence="2">Cytoplasmic in a soluble and membrane-associated form. Colocalizes with DSG4 at desmosomes (By similarity).</text>
</comment>
<comment type="tissue specificity">
    <text evidence="5">Expressed in the mammary epithelium (at protein level).</text>
</comment>
<comment type="developmental stage">
    <text evidence="6">Expressed in keratinocytes of newborn mice (at protein level).</text>
</comment>
<comment type="domain">
    <text evidence="1">The entire ARM repeats region mediates binding to CDH1/E-cadherin. The N-terminus and first three ARM repeats are sufficient for binding to DSG1. The N-terminus and first ARM repeat are sufficient for association with CTNNA1. DSC1 association requires both ends of the ARM repeat region (By similarity).</text>
</comment>
<comment type="PTM">
    <text evidence="1">May be phosphorylated by FER.</text>
</comment>
<comment type="similarity">
    <text evidence="8">Belongs to the beta-catenin family.</text>
</comment>
<name>PLAK_MOUSE</name>
<gene>
    <name evidence="9" type="primary">Jup</name>
</gene>
<organism>
    <name type="scientific">Mus musculus</name>
    <name type="common">Mouse</name>
    <dbReference type="NCBI Taxonomy" id="10090"/>
    <lineage>
        <taxon>Eukaryota</taxon>
        <taxon>Metazoa</taxon>
        <taxon>Chordata</taxon>
        <taxon>Craniata</taxon>
        <taxon>Vertebrata</taxon>
        <taxon>Euteleostomi</taxon>
        <taxon>Mammalia</taxon>
        <taxon>Eutheria</taxon>
        <taxon>Euarchontoglires</taxon>
        <taxon>Glires</taxon>
        <taxon>Rodentia</taxon>
        <taxon>Myomorpha</taxon>
        <taxon>Muroidea</taxon>
        <taxon>Muridae</taxon>
        <taxon>Murinae</taxon>
        <taxon>Mus</taxon>
        <taxon>Mus</taxon>
    </lineage>
</organism>